<gene>
    <name type="ordered locus">PLES_48951</name>
</gene>
<feature type="chain" id="PRO_1000131218" description="PKHD-type hydroxylase PLES_48951">
    <location>
        <begin position="1"/>
        <end position="226"/>
    </location>
</feature>
<feature type="domain" description="Fe2OG dioxygenase" evidence="1">
    <location>
        <begin position="78"/>
        <end position="178"/>
    </location>
</feature>
<feature type="binding site" evidence="1">
    <location>
        <position position="96"/>
    </location>
    <ligand>
        <name>Fe cation</name>
        <dbReference type="ChEBI" id="CHEBI:24875"/>
    </ligand>
</feature>
<feature type="binding site" evidence="1">
    <location>
        <position position="98"/>
    </location>
    <ligand>
        <name>Fe cation</name>
        <dbReference type="ChEBI" id="CHEBI:24875"/>
    </ligand>
</feature>
<feature type="binding site" evidence="1">
    <location>
        <position position="159"/>
    </location>
    <ligand>
        <name>Fe cation</name>
        <dbReference type="ChEBI" id="CHEBI:24875"/>
    </ligand>
</feature>
<feature type="binding site" evidence="1">
    <location>
        <position position="169"/>
    </location>
    <ligand>
        <name>2-oxoglutarate</name>
        <dbReference type="ChEBI" id="CHEBI:16810"/>
    </ligand>
</feature>
<sequence>MLLHIPAIFTAEEVSRIRAALEQAEWADGKATAGYQSAKAKHNLQLPQDHPLAREIGEAMLQRLWNHPLFMSAALPLKVFPPLFNCYTGGGSFDFHIDNAVRDIHGGRERVRTDLSSTLFFSDPEDYDGGELVIQDTYGLQQVKLPAGDLVLYPGTSLHKVNPVTRGARYASFFWTQSLVREDSQRTLLFEMDQSIQRLTRDVPDHPSLIRLTGTYHNLLRRWSEL</sequence>
<name>Y4895_PSEA8</name>
<reference key="1">
    <citation type="journal article" date="2009" name="Genome Res.">
        <title>Newly introduced genomic prophage islands are critical determinants of in vivo competitiveness in the Liverpool epidemic strain of Pseudomonas aeruginosa.</title>
        <authorList>
            <person name="Winstanley C."/>
            <person name="Langille M.G.I."/>
            <person name="Fothergill J.L."/>
            <person name="Kukavica-Ibrulj I."/>
            <person name="Paradis-Bleau C."/>
            <person name="Sanschagrin F."/>
            <person name="Thomson N.R."/>
            <person name="Winsor G.L."/>
            <person name="Quail M.A."/>
            <person name="Lennard N."/>
            <person name="Bignell A."/>
            <person name="Clarke L."/>
            <person name="Seeger K."/>
            <person name="Saunders D."/>
            <person name="Harris D."/>
            <person name="Parkhill J."/>
            <person name="Hancock R.E.W."/>
            <person name="Brinkman F.S.L."/>
            <person name="Levesque R.C."/>
        </authorList>
    </citation>
    <scope>NUCLEOTIDE SEQUENCE [LARGE SCALE GENOMIC DNA]</scope>
    <source>
        <strain>LESB58</strain>
    </source>
</reference>
<accession>B7V055</accession>
<dbReference type="EC" id="1.14.11.-" evidence="1"/>
<dbReference type="EMBL" id="FM209186">
    <property type="protein sequence ID" value="CAW29649.1"/>
    <property type="molecule type" value="Genomic_DNA"/>
</dbReference>
<dbReference type="RefSeq" id="WP_003145945.1">
    <property type="nucleotide sequence ID" value="NC_011770.1"/>
</dbReference>
<dbReference type="SMR" id="B7V055"/>
<dbReference type="KEGG" id="pag:PLES_48951"/>
<dbReference type="HOGENOM" id="CLU_106663_0_0_6"/>
<dbReference type="GO" id="GO:0016706">
    <property type="term" value="F:2-oxoglutarate-dependent dioxygenase activity"/>
    <property type="evidence" value="ECO:0007669"/>
    <property type="project" value="UniProtKB-UniRule"/>
</dbReference>
<dbReference type="GO" id="GO:0005506">
    <property type="term" value="F:iron ion binding"/>
    <property type="evidence" value="ECO:0007669"/>
    <property type="project" value="UniProtKB-UniRule"/>
</dbReference>
<dbReference type="GO" id="GO:0031418">
    <property type="term" value="F:L-ascorbic acid binding"/>
    <property type="evidence" value="ECO:0007669"/>
    <property type="project" value="UniProtKB-KW"/>
</dbReference>
<dbReference type="GO" id="GO:0006974">
    <property type="term" value="P:DNA damage response"/>
    <property type="evidence" value="ECO:0007669"/>
    <property type="project" value="TreeGrafter"/>
</dbReference>
<dbReference type="GO" id="GO:0006879">
    <property type="term" value="P:intracellular iron ion homeostasis"/>
    <property type="evidence" value="ECO:0007669"/>
    <property type="project" value="TreeGrafter"/>
</dbReference>
<dbReference type="FunFam" id="2.60.120.620:FF:000006">
    <property type="entry name" value="PKHD-type hydroxylase YbiX"/>
    <property type="match status" value="1"/>
</dbReference>
<dbReference type="FunFam" id="4.10.860.20:FF:000001">
    <property type="entry name" value="PKHD-type hydroxylase YbiX"/>
    <property type="match status" value="1"/>
</dbReference>
<dbReference type="Gene3D" id="2.60.120.620">
    <property type="entry name" value="q2cbj1_9rhob like domain"/>
    <property type="match status" value="1"/>
</dbReference>
<dbReference type="Gene3D" id="4.10.860.20">
    <property type="entry name" value="Rabenosyn, Rab binding domain"/>
    <property type="match status" value="1"/>
</dbReference>
<dbReference type="HAMAP" id="MF_00657">
    <property type="entry name" value="Hydroxyl_YbiX"/>
    <property type="match status" value="1"/>
</dbReference>
<dbReference type="InterPro" id="IPR005123">
    <property type="entry name" value="Oxoglu/Fe-dep_dioxygenase_dom"/>
</dbReference>
<dbReference type="InterPro" id="IPR041097">
    <property type="entry name" value="PKHD_C"/>
</dbReference>
<dbReference type="InterPro" id="IPR023550">
    <property type="entry name" value="PKHD_hydroxylase"/>
</dbReference>
<dbReference type="InterPro" id="IPR006620">
    <property type="entry name" value="Pro_4_hyd_alph"/>
</dbReference>
<dbReference type="InterPro" id="IPR044862">
    <property type="entry name" value="Pro_4_hyd_alph_FE2OG_OXY"/>
</dbReference>
<dbReference type="NCBIfam" id="NF003974">
    <property type="entry name" value="PRK05467.1-3"/>
    <property type="match status" value="1"/>
</dbReference>
<dbReference type="NCBIfam" id="NF003975">
    <property type="entry name" value="PRK05467.1-4"/>
    <property type="match status" value="1"/>
</dbReference>
<dbReference type="PANTHER" id="PTHR41536">
    <property type="entry name" value="PKHD-TYPE HYDROXYLASE YBIX"/>
    <property type="match status" value="1"/>
</dbReference>
<dbReference type="PANTHER" id="PTHR41536:SF1">
    <property type="entry name" value="PKHD-TYPE HYDROXYLASE YBIX"/>
    <property type="match status" value="1"/>
</dbReference>
<dbReference type="Pfam" id="PF13640">
    <property type="entry name" value="2OG-FeII_Oxy_3"/>
    <property type="match status" value="1"/>
</dbReference>
<dbReference type="Pfam" id="PF18331">
    <property type="entry name" value="PKHD_C"/>
    <property type="match status" value="1"/>
</dbReference>
<dbReference type="SMART" id="SM00702">
    <property type="entry name" value="P4Hc"/>
    <property type="match status" value="1"/>
</dbReference>
<dbReference type="SUPFAM" id="SSF51197">
    <property type="entry name" value="Clavaminate synthase-like"/>
    <property type="match status" value="1"/>
</dbReference>
<dbReference type="PROSITE" id="PS51471">
    <property type="entry name" value="FE2OG_OXY"/>
    <property type="match status" value="1"/>
</dbReference>
<keyword id="KW-0223">Dioxygenase</keyword>
<keyword id="KW-0408">Iron</keyword>
<keyword id="KW-0479">Metal-binding</keyword>
<keyword id="KW-0560">Oxidoreductase</keyword>
<keyword id="KW-0847">Vitamin C</keyword>
<comment type="cofactor">
    <cofactor evidence="1">
        <name>Fe(2+)</name>
        <dbReference type="ChEBI" id="CHEBI:29033"/>
    </cofactor>
    <text evidence="1">Binds 1 Fe(2+) ion per subunit.</text>
</comment>
<comment type="cofactor">
    <cofactor evidence="1">
        <name>L-ascorbate</name>
        <dbReference type="ChEBI" id="CHEBI:38290"/>
    </cofactor>
</comment>
<evidence type="ECO:0000255" key="1">
    <source>
        <dbReference type="HAMAP-Rule" id="MF_00657"/>
    </source>
</evidence>
<protein>
    <recommendedName>
        <fullName evidence="1">PKHD-type hydroxylase PLES_48951</fullName>
        <ecNumber evidence="1">1.14.11.-</ecNumber>
    </recommendedName>
</protein>
<organism>
    <name type="scientific">Pseudomonas aeruginosa (strain LESB58)</name>
    <dbReference type="NCBI Taxonomy" id="557722"/>
    <lineage>
        <taxon>Bacteria</taxon>
        <taxon>Pseudomonadati</taxon>
        <taxon>Pseudomonadota</taxon>
        <taxon>Gammaproteobacteria</taxon>
        <taxon>Pseudomonadales</taxon>
        <taxon>Pseudomonadaceae</taxon>
        <taxon>Pseudomonas</taxon>
    </lineage>
</organism>
<proteinExistence type="inferred from homology"/>